<dbReference type="EMBL" id="AB065658">
    <property type="protein sequence ID" value="BAC05884.1"/>
    <property type="molecule type" value="Genomic_DNA"/>
</dbReference>
<dbReference type="EMBL" id="AB065840">
    <property type="protein sequence ID" value="BAC06059.1"/>
    <property type="molecule type" value="Genomic_DNA"/>
</dbReference>
<dbReference type="EMBL" id="BK004345">
    <property type="protein sequence ID" value="DAA04743.1"/>
    <property type="molecule type" value="Genomic_DNA"/>
</dbReference>
<dbReference type="CCDS" id="CCDS31519.1"/>
<dbReference type="RefSeq" id="NP_001005201.1">
    <property type="nucleotide sequence ID" value="NM_001005201.1"/>
</dbReference>
<dbReference type="SMR" id="Q8N146"/>
<dbReference type="FunCoup" id="Q8N146">
    <property type="interactions" value="416"/>
</dbReference>
<dbReference type="STRING" id="9606.ENSP00000323928"/>
<dbReference type="GlyCosmos" id="Q8N146">
    <property type="glycosylation" value="1 site, No reported glycans"/>
</dbReference>
<dbReference type="GlyGen" id="Q8N146">
    <property type="glycosylation" value="1 site"/>
</dbReference>
<dbReference type="BioMuta" id="OR8H3"/>
<dbReference type="DMDM" id="38372641"/>
<dbReference type="MassIVE" id="Q8N146"/>
<dbReference type="PaxDb" id="9606-ENSP00000323928"/>
<dbReference type="PeptideAtlas" id="Q8N146"/>
<dbReference type="Antibodypedia" id="58959">
    <property type="antibodies" value="38 antibodies from 14 providers"/>
</dbReference>
<dbReference type="DNASU" id="390152"/>
<dbReference type="Ensembl" id="ENST00000313472.3">
    <property type="protein sequence ID" value="ENSP00000323928.3"/>
    <property type="gene ID" value="ENSG00000181761.5"/>
</dbReference>
<dbReference type="GeneID" id="390152"/>
<dbReference type="KEGG" id="hsa:390152"/>
<dbReference type="MANE-Select" id="ENST00000313472.3">
    <property type="protein sequence ID" value="ENSP00000323928.3"/>
    <property type="RefSeq nucleotide sequence ID" value="NM_001005201.1"/>
    <property type="RefSeq protein sequence ID" value="NP_001005201.1"/>
</dbReference>
<dbReference type="UCSC" id="uc001nii.1">
    <property type="organism name" value="human"/>
</dbReference>
<dbReference type="AGR" id="HGNC:15309"/>
<dbReference type="CTD" id="390152"/>
<dbReference type="GeneCards" id="OR8H3"/>
<dbReference type="HGNC" id="HGNC:15309">
    <property type="gene designation" value="OR8H3"/>
</dbReference>
<dbReference type="HPA" id="ENSG00000181761">
    <property type="expression patterns" value="Not detected"/>
</dbReference>
<dbReference type="neXtProt" id="NX_Q8N146"/>
<dbReference type="OpenTargets" id="ENSG00000181761"/>
<dbReference type="PharmGKB" id="PA32769"/>
<dbReference type="VEuPathDB" id="HostDB:ENSG00000181761"/>
<dbReference type="eggNOG" id="ENOG502SKRH">
    <property type="taxonomic scope" value="Eukaryota"/>
</dbReference>
<dbReference type="GeneTree" id="ENSGT01120000271889"/>
<dbReference type="HOGENOM" id="CLU_012526_8_1_1"/>
<dbReference type="InParanoid" id="Q8N146"/>
<dbReference type="OMA" id="ITLHFCK"/>
<dbReference type="OrthoDB" id="8891939at2759"/>
<dbReference type="PAN-GO" id="Q8N146">
    <property type="GO annotations" value="4 GO annotations based on evolutionary models"/>
</dbReference>
<dbReference type="PhylomeDB" id="Q8N146"/>
<dbReference type="TreeFam" id="TF352753"/>
<dbReference type="PathwayCommons" id="Q8N146"/>
<dbReference type="Reactome" id="R-HSA-9752946">
    <property type="pathway name" value="Expression and translocation of olfactory receptors"/>
</dbReference>
<dbReference type="BioGRID-ORCS" id="390152">
    <property type="hits" value="14 hits in 646 CRISPR screens"/>
</dbReference>
<dbReference type="GeneWiki" id="OR8H3"/>
<dbReference type="GenomeRNAi" id="390152"/>
<dbReference type="Pharos" id="Q8N146">
    <property type="development level" value="Tdark"/>
</dbReference>
<dbReference type="PRO" id="PR:Q8N146"/>
<dbReference type="Proteomes" id="UP000005640">
    <property type="component" value="Chromosome 11"/>
</dbReference>
<dbReference type="RNAct" id="Q8N146">
    <property type="molecule type" value="protein"/>
</dbReference>
<dbReference type="GO" id="GO:0005886">
    <property type="term" value="C:plasma membrane"/>
    <property type="evidence" value="ECO:0007669"/>
    <property type="project" value="UniProtKB-SubCell"/>
</dbReference>
<dbReference type="GO" id="GO:0004930">
    <property type="term" value="F:G protein-coupled receptor activity"/>
    <property type="evidence" value="ECO:0007669"/>
    <property type="project" value="UniProtKB-KW"/>
</dbReference>
<dbReference type="GO" id="GO:0005549">
    <property type="term" value="F:odorant binding"/>
    <property type="evidence" value="ECO:0000318"/>
    <property type="project" value="GO_Central"/>
</dbReference>
<dbReference type="GO" id="GO:0004984">
    <property type="term" value="F:olfactory receptor activity"/>
    <property type="evidence" value="ECO:0000318"/>
    <property type="project" value="GO_Central"/>
</dbReference>
<dbReference type="GO" id="GO:0007186">
    <property type="term" value="P:G protein-coupled receptor signaling pathway"/>
    <property type="evidence" value="ECO:0000318"/>
    <property type="project" value="GO_Central"/>
</dbReference>
<dbReference type="GO" id="GO:0007608">
    <property type="term" value="P:sensory perception of smell"/>
    <property type="evidence" value="ECO:0000318"/>
    <property type="project" value="GO_Central"/>
</dbReference>
<dbReference type="CDD" id="cd15411">
    <property type="entry name" value="7tmA_OR8H-like"/>
    <property type="match status" value="1"/>
</dbReference>
<dbReference type="FunFam" id="1.10.1220.70:FF:000001">
    <property type="entry name" value="Olfactory receptor"/>
    <property type="match status" value="1"/>
</dbReference>
<dbReference type="FunFam" id="1.20.1070.10:FF:000003">
    <property type="entry name" value="Olfactory receptor"/>
    <property type="match status" value="1"/>
</dbReference>
<dbReference type="Gene3D" id="1.20.1070.10">
    <property type="entry name" value="Rhodopsin 7-helix transmembrane proteins"/>
    <property type="match status" value="1"/>
</dbReference>
<dbReference type="InterPro" id="IPR000276">
    <property type="entry name" value="GPCR_Rhodpsn"/>
</dbReference>
<dbReference type="InterPro" id="IPR017452">
    <property type="entry name" value="GPCR_Rhodpsn_7TM"/>
</dbReference>
<dbReference type="InterPro" id="IPR000725">
    <property type="entry name" value="Olfact_rcpt"/>
</dbReference>
<dbReference type="PANTHER" id="PTHR48018">
    <property type="entry name" value="OLFACTORY RECEPTOR"/>
    <property type="match status" value="1"/>
</dbReference>
<dbReference type="Pfam" id="PF13853">
    <property type="entry name" value="7tm_4"/>
    <property type="match status" value="1"/>
</dbReference>
<dbReference type="PRINTS" id="PR00237">
    <property type="entry name" value="GPCRRHODOPSN"/>
</dbReference>
<dbReference type="PRINTS" id="PR00245">
    <property type="entry name" value="OLFACTORYR"/>
</dbReference>
<dbReference type="SUPFAM" id="SSF81321">
    <property type="entry name" value="Family A G protein-coupled receptor-like"/>
    <property type="match status" value="1"/>
</dbReference>
<dbReference type="PROSITE" id="PS00237">
    <property type="entry name" value="G_PROTEIN_RECEP_F1_1"/>
    <property type="match status" value="1"/>
</dbReference>
<dbReference type="PROSITE" id="PS50262">
    <property type="entry name" value="G_PROTEIN_RECEP_F1_2"/>
    <property type="match status" value="1"/>
</dbReference>
<name>OR8H3_HUMAN</name>
<feature type="chain" id="PRO_0000150667" description="Olfactory receptor 8H3">
    <location>
        <begin position="1"/>
        <end position="312"/>
    </location>
</feature>
<feature type="topological domain" description="Extracellular" evidence="1">
    <location>
        <begin position="1"/>
        <end position="26"/>
    </location>
</feature>
<feature type="transmembrane region" description="Helical; Name=1" evidence="1">
    <location>
        <begin position="27"/>
        <end position="47"/>
    </location>
</feature>
<feature type="topological domain" description="Cytoplasmic" evidence="1">
    <location>
        <begin position="48"/>
        <end position="55"/>
    </location>
</feature>
<feature type="transmembrane region" description="Helical; Name=2" evidence="1">
    <location>
        <begin position="56"/>
        <end position="76"/>
    </location>
</feature>
<feature type="topological domain" description="Extracellular" evidence="1">
    <location>
        <begin position="77"/>
        <end position="99"/>
    </location>
</feature>
<feature type="transmembrane region" description="Helical; Name=3" evidence="1">
    <location>
        <begin position="100"/>
        <end position="120"/>
    </location>
</feature>
<feature type="topological domain" description="Cytoplasmic" evidence="1">
    <location>
        <begin position="121"/>
        <end position="139"/>
    </location>
</feature>
<feature type="transmembrane region" description="Helical; Name=4" evidence="1">
    <location>
        <begin position="140"/>
        <end position="160"/>
    </location>
</feature>
<feature type="topological domain" description="Extracellular" evidence="1">
    <location>
        <begin position="161"/>
        <end position="197"/>
    </location>
</feature>
<feature type="transmembrane region" description="Helical; Name=5" evidence="1">
    <location>
        <begin position="198"/>
        <end position="217"/>
    </location>
</feature>
<feature type="topological domain" description="Cytoplasmic" evidence="1">
    <location>
        <begin position="218"/>
        <end position="237"/>
    </location>
</feature>
<feature type="transmembrane region" description="Helical; Name=6" evidence="1">
    <location>
        <begin position="238"/>
        <end position="258"/>
    </location>
</feature>
<feature type="topological domain" description="Extracellular" evidence="1">
    <location>
        <begin position="259"/>
        <end position="271"/>
    </location>
</feature>
<feature type="transmembrane region" description="Helical; Name=7" evidence="1">
    <location>
        <begin position="272"/>
        <end position="292"/>
    </location>
</feature>
<feature type="topological domain" description="Cytoplasmic" evidence="1">
    <location>
        <begin position="293"/>
        <end position="312"/>
    </location>
</feature>
<feature type="glycosylation site" description="N-linked (GlcNAc...) asparagine" evidence="1">
    <location>
        <position position="6"/>
    </location>
</feature>
<feature type="disulfide bond" evidence="2">
    <location>
        <begin position="97"/>
        <end position="189"/>
    </location>
</feature>
<feature type="sequence variant" id="VAR_060012" description="In dbSNP:rs7107077.">
    <original>L</original>
    <variation>I</variation>
    <location>
        <position position="47"/>
    </location>
</feature>
<feature type="sequence variant" id="VAR_034264" description="In dbSNP:rs1842691.">
    <original>P</original>
    <variation>S</variation>
    <location>
        <position position="137"/>
    </location>
</feature>
<feature type="sequence variant" id="VAR_024122" description="In dbSNP:rs17531522.">
    <original>I</original>
    <variation>V</variation>
    <location>
        <position position="201"/>
    </location>
</feature>
<feature type="sequence variant" id="VAR_034265" description="In dbSNP:rs11606538.">
    <original>R</original>
    <variation>K</variation>
    <location>
        <position position="295"/>
    </location>
</feature>
<gene>
    <name type="primary">OR8H3</name>
</gene>
<evidence type="ECO:0000255" key="1"/>
<evidence type="ECO:0000255" key="2">
    <source>
        <dbReference type="PROSITE-ProRule" id="PRU00521"/>
    </source>
</evidence>
<evidence type="ECO:0000305" key="3"/>
<proteinExistence type="inferred from homology"/>
<organism>
    <name type="scientific">Homo sapiens</name>
    <name type="common">Human</name>
    <dbReference type="NCBI Taxonomy" id="9606"/>
    <lineage>
        <taxon>Eukaryota</taxon>
        <taxon>Metazoa</taxon>
        <taxon>Chordata</taxon>
        <taxon>Craniata</taxon>
        <taxon>Vertebrata</taxon>
        <taxon>Euteleostomi</taxon>
        <taxon>Mammalia</taxon>
        <taxon>Eutheria</taxon>
        <taxon>Euarchontoglires</taxon>
        <taxon>Primates</taxon>
        <taxon>Haplorrhini</taxon>
        <taxon>Catarrhini</taxon>
        <taxon>Hominidae</taxon>
        <taxon>Homo</taxon>
    </lineage>
</organism>
<comment type="function">
    <text evidence="3">Odorant receptor.</text>
</comment>
<comment type="subcellular location">
    <subcellularLocation>
        <location>Cell membrane</location>
        <topology>Multi-pass membrane protein</topology>
    </subcellularLocation>
</comment>
<comment type="similarity">
    <text evidence="2">Belongs to the G-protein coupled receptor 1 family.</text>
</comment>
<comment type="online information" name="Human Olfactory Receptor Data Exploratorium (HORDE)">
    <link uri="http://genome.weizmann.ac.il/horde/card/index/symbol:OR8H3"/>
</comment>
<keyword id="KW-1003">Cell membrane</keyword>
<keyword id="KW-1015">Disulfide bond</keyword>
<keyword id="KW-0297">G-protein coupled receptor</keyword>
<keyword id="KW-0325">Glycoprotein</keyword>
<keyword id="KW-0472">Membrane</keyword>
<keyword id="KW-0552">Olfaction</keyword>
<keyword id="KW-0675">Receptor</keyword>
<keyword id="KW-1185">Reference proteome</keyword>
<keyword id="KW-0716">Sensory transduction</keyword>
<keyword id="KW-0807">Transducer</keyword>
<keyword id="KW-0812">Transmembrane</keyword>
<keyword id="KW-1133">Transmembrane helix</keyword>
<accession>Q8N146</accession>
<accession>Q6IFB7</accession>
<reference key="1">
    <citation type="submission" date="2001-07" db="EMBL/GenBank/DDBJ databases">
        <title>Genome-wide discovery and analysis of human seven transmembrane helix receptor genes.</title>
        <authorList>
            <person name="Suwa M."/>
            <person name="Sato T."/>
            <person name="Okouchi I."/>
            <person name="Arita M."/>
            <person name="Futami K."/>
            <person name="Matsumoto S."/>
            <person name="Tsutsumi S."/>
            <person name="Aburatani H."/>
            <person name="Asai K."/>
            <person name="Akiyama Y."/>
        </authorList>
    </citation>
    <scope>NUCLEOTIDE SEQUENCE [GENOMIC DNA]</scope>
</reference>
<reference key="2">
    <citation type="journal article" date="2004" name="Proc. Natl. Acad. Sci. U.S.A.">
        <title>The human olfactory receptor gene family.</title>
        <authorList>
            <person name="Malnic B."/>
            <person name="Godfrey P.A."/>
            <person name="Buck L.B."/>
        </authorList>
    </citation>
    <scope>IDENTIFICATION</scope>
</reference>
<reference key="3">
    <citation type="journal article" date="2004" name="Proc. Natl. Acad. Sci. U.S.A.">
        <authorList>
            <person name="Malnic B."/>
            <person name="Godfrey P.A."/>
            <person name="Buck L.B."/>
        </authorList>
    </citation>
    <scope>ERRATUM OF PUBMED:14983052</scope>
</reference>
<sequence>MMGRRNDTNVADFILTGLSDSEEVQMALFMLFLLIYLITMLGNVGMLLIIRLDLQLHTPMYFFLTHLSFIDLSYSTVVTPKTLANLLTSNYISFTGCFAQMFCFVFLGTAECYLLSSMAYDRYAAICSPLHYTVIMPKRLCLALITGPYVIGFMDSFVNVVSMSRLHFCDSNIIHHFFCDTSPILALSCTDTDNTEMLIFIIAGSTLMVSLITISASYVSILSTILKINSTSGKQKAFSTCVSHLLGVTIFYGTMIFTYLKPRKSYSLGRDQVAPVFYTIVIPMLNPLIYSLRNREVKNALIRVMQRRQDSR</sequence>
<protein>
    <recommendedName>
        <fullName>Olfactory receptor 8H3</fullName>
    </recommendedName>
    <alternativeName>
        <fullName>Olfactory receptor OR11-172</fullName>
    </alternativeName>
</protein>